<organism>
    <name type="scientific">Helicobacter hepaticus (strain ATCC 51449 / 3B1)</name>
    <dbReference type="NCBI Taxonomy" id="235279"/>
    <lineage>
        <taxon>Bacteria</taxon>
        <taxon>Pseudomonadati</taxon>
        <taxon>Campylobacterota</taxon>
        <taxon>Epsilonproteobacteria</taxon>
        <taxon>Campylobacterales</taxon>
        <taxon>Helicobacteraceae</taxon>
        <taxon>Helicobacter</taxon>
    </lineage>
</organism>
<feature type="chain" id="PRO_0000112621" description="Acetylglutamate kinase">
    <location>
        <begin position="1"/>
        <end position="280"/>
    </location>
</feature>
<feature type="binding site" evidence="1">
    <location>
        <begin position="57"/>
        <end position="58"/>
    </location>
    <ligand>
        <name>substrate</name>
    </ligand>
</feature>
<feature type="binding site" evidence="1">
    <location>
        <position position="79"/>
    </location>
    <ligand>
        <name>substrate</name>
    </ligand>
</feature>
<feature type="binding site" evidence="1">
    <location>
        <position position="174"/>
    </location>
    <ligand>
        <name>substrate</name>
    </ligand>
</feature>
<feature type="site" description="Transition state stabilizer" evidence="1">
    <location>
        <position position="22"/>
    </location>
</feature>
<feature type="site" description="Transition state stabilizer" evidence="1">
    <location>
        <position position="234"/>
    </location>
</feature>
<comment type="function">
    <text evidence="1">Catalyzes the ATP-dependent phosphorylation of N-acetyl-L-glutamate.</text>
</comment>
<comment type="catalytic activity">
    <reaction evidence="1">
        <text>N-acetyl-L-glutamate + ATP = N-acetyl-L-glutamyl 5-phosphate + ADP</text>
        <dbReference type="Rhea" id="RHEA:14629"/>
        <dbReference type="ChEBI" id="CHEBI:30616"/>
        <dbReference type="ChEBI" id="CHEBI:44337"/>
        <dbReference type="ChEBI" id="CHEBI:57936"/>
        <dbReference type="ChEBI" id="CHEBI:456216"/>
        <dbReference type="EC" id="2.7.2.8"/>
    </reaction>
</comment>
<comment type="pathway">
    <text evidence="1">Amino-acid biosynthesis; L-arginine biosynthesis; N(2)-acetyl-L-ornithine from L-glutamate: step 2/4.</text>
</comment>
<comment type="subcellular location">
    <subcellularLocation>
        <location evidence="1">Cytoplasm</location>
    </subcellularLocation>
</comment>
<comment type="similarity">
    <text evidence="1">Belongs to the acetylglutamate kinase family. ArgB subfamily.</text>
</comment>
<evidence type="ECO:0000255" key="1">
    <source>
        <dbReference type="HAMAP-Rule" id="MF_00082"/>
    </source>
</evidence>
<sequence>MKILLDSLPFIRIFRGQIIVIKYGGAAQINPQLKEKFALDIVIMYMLGLKPVIIHGGGKRINEMLDIMGIESEFYNGYRITSAECMRVVEMVLSGEINKELTAFLNFHGAKAVGMSGKDAHLLQAKAKDNGALGYTGEITAVNPSFLLNVINDGFVPIIAPIATGEGAGHLGYNINADIAACHIAKALSAKKIIFLSDIAGVLDSNKEPISSLTPSDIKQLQKQGVINGGMIPKLEACVDCVQNGVEKAHIIDGRIEHSLLLELFTTQGIGTEIYNGQDK</sequence>
<gene>
    <name evidence="1" type="primary">argB</name>
    <name type="ordered locus">HH_0179</name>
</gene>
<protein>
    <recommendedName>
        <fullName evidence="1">Acetylglutamate kinase</fullName>
        <ecNumber evidence="1">2.7.2.8</ecNumber>
    </recommendedName>
    <alternativeName>
        <fullName evidence="1">N-acetyl-L-glutamate 5-phosphotransferase</fullName>
    </alternativeName>
    <alternativeName>
        <fullName evidence="1">NAG kinase</fullName>
        <shortName evidence="1">NAGK</shortName>
    </alternativeName>
</protein>
<reference key="1">
    <citation type="journal article" date="2003" name="Proc. Natl. Acad. Sci. U.S.A.">
        <title>The complete genome sequence of the carcinogenic bacterium Helicobacter hepaticus.</title>
        <authorList>
            <person name="Suerbaum S."/>
            <person name="Josenhans C."/>
            <person name="Sterzenbach T."/>
            <person name="Drescher B."/>
            <person name="Brandt P."/>
            <person name="Bell M."/>
            <person name="Droege M."/>
            <person name="Fartmann B."/>
            <person name="Fischer H.-P."/>
            <person name="Ge Z."/>
            <person name="Hoerster A."/>
            <person name="Holland R."/>
            <person name="Klein K."/>
            <person name="Koenig J."/>
            <person name="Macko L."/>
            <person name="Mendz G.L."/>
            <person name="Nyakatura G."/>
            <person name="Schauer D.B."/>
            <person name="Shen Z."/>
            <person name="Weber J."/>
            <person name="Frosch M."/>
            <person name="Fox J.G."/>
        </authorList>
    </citation>
    <scope>NUCLEOTIDE SEQUENCE [LARGE SCALE GENOMIC DNA]</scope>
    <source>
        <strain>ATCC 51449 / 3B1</strain>
    </source>
</reference>
<keyword id="KW-0028">Amino-acid biosynthesis</keyword>
<keyword id="KW-0055">Arginine biosynthesis</keyword>
<keyword id="KW-0067">ATP-binding</keyword>
<keyword id="KW-0963">Cytoplasm</keyword>
<keyword id="KW-0418">Kinase</keyword>
<keyword id="KW-0547">Nucleotide-binding</keyword>
<keyword id="KW-1185">Reference proteome</keyword>
<keyword id="KW-0808">Transferase</keyword>
<proteinExistence type="inferred from homology"/>
<name>ARGB_HELHP</name>
<accession>Q7VJR4</accession>
<dbReference type="EC" id="2.7.2.8" evidence="1"/>
<dbReference type="EMBL" id="AE017125">
    <property type="protein sequence ID" value="AAP76776.1"/>
    <property type="molecule type" value="Genomic_DNA"/>
</dbReference>
<dbReference type="SMR" id="Q7VJR4"/>
<dbReference type="STRING" id="235279.HH_0179"/>
<dbReference type="KEGG" id="hhe:HH_0179"/>
<dbReference type="eggNOG" id="COG0548">
    <property type="taxonomic scope" value="Bacteria"/>
</dbReference>
<dbReference type="HOGENOM" id="CLU_053680_0_0_7"/>
<dbReference type="UniPathway" id="UPA00068">
    <property type="reaction ID" value="UER00107"/>
</dbReference>
<dbReference type="Proteomes" id="UP000002495">
    <property type="component" value="Chromosome"/>
</dbReference>
<dbReference type="GO" id="GO:0005737">
    <property type="term" value="C:cytoplasm"/>
    <property type="evidence" value="ECO:0007669"/>
    <property type="project" value="UniProtKB-SubCell"/>
</dbReference>
<dbReference type="GO" id="GO:0003991">
    <property type="term" value="F:acetylglutamate kinase activity"/>
    <property type="evidence" value="ECO:0007669"/>
    <property type="project" value="UniProtKB-UniRule"/>
</dbReference>
<dbReference type="GO" id="GO:0005524">
    <property type="term" value="F:ATP binding"/>
    <property type="evidence" value="ECO:0007669"/>
    <property type="project" value="UniProtKB-UniRule"/>
</dbReference>
<dbReference type="GO" id="GO:0042450">
    <property type="term" value="P:arginine biosynthetic process via ornithine"/>
    <property type="evidence" value="ECO:0007669"/>
    <property type="project" value="UniProtKB-UniRule"/>
</dbReference>
<dbReference type="GO" id="GO:0006526">
    <property type="term" value="P:L-arginine biosynthetic process"/>
    <property type="evidence" value="ECO:0007669"/>
    <property type="project" value="UniProtKB-UniPathway"/>
</dbReference>
<dbReference type="CDD" id="cd04250">
    <property type="entry name" value="AAK_NAGK-C"/>
    <property type="match status" value="1"/>
</dbReference>
<dbReference type="FunFam" id="3.40.1160.10:FF:000004">
    <property type="entry name" value="Acetylglutamate kinase"/>
    <property type="match status" value="1"/>
</dbReference>
<dbReference type="Gene3D" id="3.40.1160.10">
    <property type="entry name" value="Acetylglutamate kinase-like"/>
    <property type="match status" value="1"/>
</dbReference>
<dbReference type="HAMAP" id="MF_00082">
    <property type="entry name" value="ArgB"/>
    <property type="match status" value="1"/>
</dbReference>
<dbReference type="InterPro" id="IPR036393">
    <property type="entry name" value="AceGlu_kinase-like_sf"/>
</dbReference>
<dbReference type="InterPro" id="IPR004662">
    <property type="entry name" value="AcgluKinase_fam"/>
</dbReference>
<dbReference type="InterPro" id="IPR037528">
    <property type="entry name" value="ArgB"/>
</dbReference>
<dbReference type="InterPro" id="IPR001048">
    <property type="entry name" value="Asp/Glu/Uridylate_kinase"/>
</dbReference>
<dbReference type="InterPro" id="IPR001057">
    <property type="entry name" value="Glu/AcGlu_kinase"/>
</dbReference>
<dbReference type="InterPro" id="IPR041727">
    <property type="entry name" value="NAGK-C"/>
</dbReference>
<dbReference type="NCBIfam" id="TIGR00761">
    <property type="entry name" value="argB"/>
    <property type="match status" value="1"/>
</dbReference>
<dbReference type="PANTHER" id="PTHR23342">
    <property type="entry name" value="N-ACETYLGLUTAMATE SYNTHASE"/>
    <property type="match status" value="1"/>
</dbReference>
<dbReference type="PANTHER" id="PTHR23342:SF0">
    <property type="entry name" value="N-ACETYLGLUTAMATE SYNTHASE, MITOCHONDRIAL"/>
    <property type="match status" value="1"/>
</dbReference>
<dbReference type="Pfam" id="PF00696">
    <property type="entry name" value="AA_kinase"/>
    <property type="match status" value="1"/>
</dbReference>
<dbReference type="PIRSF" id="PIRSF000728">
    <property type="entry name" value="NAGK"/>
    <property type="match status" value="1"/>
</dbReference>
<dbReference type="PRINTS" id="PR00474">
    <property type="entry name" value="GLU5KINASE"/>
</dbReference>
<dbReference type="SUPFAM" id="SSF53633">
    <property type="entry name" value="Carbamate kinase-like"/>
    <property type="match status" value="1"/>
</dbReference>